<feature type="chain" id="PRO_0000428311" description="Uncharacterized oxidoreductase MT2820">
    <location>
        <begin position="1"/>
        <end position="272"/>
    </location>
</feature>
<feature type="active site" description="Proton acceptor" evidence="2">
    <location>
        <position position="170"/>
    </location>
</feature>
<feature type="binding site" evidence="1">
    <location>
        <begin position="12"/>
        <end position="34"/>
    </location>
    <ligand>
        <name>NAD(+)</name>
        <dbReference type="ChEBI" id="CHEBI:57540"/>
    </ligand>
</feature>
<feature type="binding site" evidence="1">
    <location>
        <begin position="39"/>
        <end position="40"/>
    </location>
    <ligand>
        <name>NAD(+)</name>
        <dbReference type="ChEBI" id="CHEBI:57540"/>
    </ligand>
</feature>
<feature type="binding site" evidence="1">
    <location>
        <begin position="77"/>
        <end position="78"/>
    </location>
    <ligand>
        <name>NAD(+)</name>
        <dbReference type="ChEBI" id="CHEBI:57540"/>
    </ligand>
</feature>
<feature type="binding site" evidence="1">
    <location>
        <position position="104"/>
    </location>
    <ligand>
        <name>NAD(+)</name>
        <dbReference type="ChEBI" id="CHEBI:57540"/>
    </ligand>
</feature>
<feature type="binding site" evidence="1">
    <location>
        <position position="153"/>
    </location>
    <ligand>
        <name>substrate</name>
    </ligand>
</feature>
<feature type="binding site" evidence="1">
    <location>
        <position position="174"/>
    </location>
    <ligand>
        <name>NAD(+)</name>
        <dbReference type="ChEBI" id="CHEBI:57540"/>
    </ligand>
</feature>
<feature type="binding site" evidence="1">
    <location>
        <begin position="203"/>
        <end position="205"/>
    </location>
    <ligand>
        <name>NAD(+)</name>
        <dbReference type="ChEBI" id="CHEBI:57540"/>
    </ligand>
</feature>
<keyword id="KW-0520">NAD</keyword>
<keyword id="KW-0560">Oxidoreductase</keyword>
<keyword id="KW-1185">Reference proteome</keyword>
<reference key="1">
    <citation type="journal article" date="2002" name="J. Bacteriol.">
        <title>Whole-genome comparison of Mycobacterium tuberculosis clinical and laboratory strains.</title>
        <authorList>
            <person name="Fleischmann R.D."/>
            <person name="Alland D."/>
            <person name="Eisen J.A."/>
            <person name="Carpenter L."/>
            <person name="White O."/>
            <person name="Peterson J.D."/>
            <person name="DeBoy R.T."/>
            <person name="Dodson R.J."/>
            <person name="Gwinn M.L."/>
            <person name="Haft D.H."/>
            <person name="Hickey E.K."/>
            <person name="Kolonay J.F."/>
            <person name="Nelson W.C."/>
            <person name="Umayam L.A."/>
            <person name="Ermolaeva M.D."/>
            <person name="Salzberg S.L."/>
            <person name="Delcher A."/>
            <person name="Utterback T.R."/>
            <person name="Weidman J.F."/>
            <person name="Khouri H.M."/>
            <person name="Gill J."/>
            <person name="Mikula A."/>
            <person name="Bishai W."/>
            <person name="Jacobs W.R. Jr."/>
            <person name="Venter J.C."/>
            <person name="Fraser C.M."/>
        </authorList>
    </citation>
    <scope>NUCLEOTIDE SEQUENCE [LARGE SCALE GENOMIC DNA]</scope>
    <source>
        <strain>CDC 1551 / Oshkosh</strain>
    </source>
</reference>
<evidence type="ECO:0000250" key="1"/>
<evidence type="ECO:0000255" key="2">
    <source>
        <dbReference type="PROSITE-ProRule" id="PRU10001"/>
    </source>
</evidence>
<evidence type="ECO:0000305" key="3"/>
<name>Y2750_MYCTO</name>
<accession>P9WGS4</accession>
<accession>L0TC54</accession>
<accession>O33292</accession>
<accession>Q7D6N3</accession>
<comment type="similarity">
    <text evidence="3">Belongs to the short-chain dehydrogenases/reductases (SDR) family.</text>
</comment>
<sequence length="272" mass="28223">MIDRPLEGKVAFITGAARGLGRAHAVRLAADGANIIAVDICEQIASVPYPLSTADDLAATVELVEDAGGGIVARQGDVRDRASLSVALQAGLDEFGRLDIVVANAGIAMMQAGDDGWRDVIDVNLTGVFHTVQVAIPTLIEQGTGGSIVLISSAAGLVGIGSSDPGSLGYAAAKHGVVGLMRAYANHLAPQNIRVNSVHPCGVDTPMINNEFFQQWLTTADMDAPHNLGNALPVELVQPTDIANAVAWLASEEARYVTGVTLPVDAGFVNKR</sequence>
<proteinExistence type="inferred from homology"/>
<protein>
    <recommendedName>
        <fullName>Uncharacterized oxidoreductase MT2820</fullName>
        <ecNumber>1.-.-.-</ecNumber>
    </recommendedName>
</protein>
<gene>
    <name type="ordered locus">MT2820</name>
</gene>
<dbReference type="EC" id="1.-.-.-"/>
<dbReference type="EMBL" id="AE000516">
    <property type="protein sequence ID" value="AAK47140.1"/>
    <property type="molecule type" value="Genomic_DNA"/>
</dbReference>
<dbReference type="PIR" id="E70879">
    <property type="entry name" value="E70879"/>
</dbReference>
<dbReference type="RefSeq" id="WP_003414045.1">
    <property type="nucleotide sequence ID" value="NZ_KK341227.1"/>
</dbReference>
<dbReference type="SMR" id="P9WGS4"/>
<dbReference type="KEGG" id="mtc:MT2820"/>
<dbReference type="PATRIC" id="fig|83331.31.peg.3041"/>
<dbReference type="HOGENOM" id="CLU_010194_1_0_11"/>
<dbReference type="Proteomes" id="UP000001020">
    <property type="component" value="Chromosome"/>
</dbReference>
<dbReference type="GO" id="GO:0016616">
    <property type="term" value="F:oxidoreductase activity, acting on the CH-OH group of donors, NAD or NADP as acceptor"/>
    <property type="evidence" value="ECO:0007669"/>
    <property type="project" value="TreeGrafter"/>
</dbReference>
<dbReference type="CDD" id="cd05233">
    <property type="entry name" value="SDR_c"/>
    <property type="match status" value="1"/>
</dbReference>
<dbReference type="FunFam" id="3.40.50.720:FF:000084">
    <property type="entry name" value="Short-chain dehydrogenase reductase"/>
    <property type="match status" value="1"/>
</dbReference>
<dbReference type="Gene3D" id="3.40.50.720">
    <property type="entry name" value="NAD(P)-binding Rossmann-like Domain"/>
    <property type="match status" value="1"/>
</dbReference>
<dbReference type="InterPro" id="IPR036291">
    <property type="entry name" value="NAD(P)-bd_dom_sf"/>
</dbReference>
<dbReference type="InterPro" id="IPR020904">
    <property type="entry name" value="Sc_DH/Rdtase_CS"/>
</dbReference>
<dbReference type="InterPro" id="IPR002347">
    <property type="entry name" value="SDR_fam"/>
</dbReference>
<dbReference type="InterPro" id="IPR023985">
    <property type="entry name" value="SDR_subfam_1"/>
</dbReference>
<dbReference type="NCBIfam" id="NF009467">
    <property type="entry name" value="PRK12826.1-3"/>
    <property type="match status" value="1"/>
</dbReference>
<dbReference type="NCBIfam" id="TIGR03971">
    <property type="entry name" value="SDR_subfam_1"/>
    <property type="match status" value="1"/>
</dbReference>
<dbReference type="PANTHER" id="PTHR42760:SF133">
    <property type="entry name" value="3-OXOACYL-[ACYL-CARRIER-PROTEIN] REDUCTASE"/>
    <property type="match status" value="1"/>
</dbReference>
<dbReference type="PANTHER" id="PTHR42760">
    <property type="entry name" value="SHORT-CHAIN DEHYDROGENASES/REDUCTASES FAMILY MEMBER"/>
    <property type="match status" value="1"/>
</dbReference>
<dbReference type="Pfam" id="PF13561">
    <property type="entry name" value="adh_short_C2"/>
    <property type="match status" value="1"/>
</dbReference>
<dbReference type="PRINTS" id="PR00081">
    <property type="entry name" value="GDHRDH"/>
</dbReference>
<dbReference type="PRINTS" id="PR00080">
    <property type="entry name" value="SDRFAMILY"/>
</dbReference>
<dbReference type="SUPFAM" id="SSF51735">
    <property type="entry name" value="NAD(P)-binding Rossmann-fold domains"/>
    <property type="match status" value="1"/>
</dbReference>
<dbReference type="PROSITE" id="PS00061">
    <property type="entry name" value="ADH_SHORT"/>
    <property type="match status" value="1"/>
</dbReference>
<organism>
    <name type="scientific">Mycobacterium tuberculosis (strain CDC 1551 / Oshkosh)</name>
    <dbReference type="NCBI Taxonomy" id="83331"/>
    <lineage>
        <taxon>Bacteria</taxon>
        <taxon>Bacillati</taxon>
        <taxon>Actinomycetota</taxon>
        <taxon>Actinomycetes</taxon>
        <taxon>Mycobacteriales</taxon>
        <taxon>Mycobacteriaceae</taxon>
        <taxon>Mycobacterium</taxon>
        <taxon>Mycobacterium tuberculosis complex</taxon>
    </lineage>
</organism>